<evidence type="ECO:0000255" key="1">
    <source>
        <dbReference type="HAMAP-Rule" id="MF_00743"/>
    </source>
</evidence>
<protein>
    <recommendedName>
        <fullName evidence="1">Fumarate hydratase class II</fullName>
        <shortName evidence="1">Fumarase C</shortName>
        <ecNumber evidence="1">4.2.1.2</ecNumber>
    </recommendedName>
    <alternativeName>
        <fullName evidence="1">Aerobic fumarase</fullName>
    </alternativeName>
    <alternativeName>
        <fullName evidence="1">Iron-independent fumarase</fullName>
    </alternativeName>
</protein>
<gene>
    <name evidence="1" type="primary">fumC</name>
    <name type="ordered locus">SERP1387</name>
</gene>
<proteinExistence type="inferred from homology"/>
<name>FUMC_STAEQ</name>
<organism>
    <name type="scientific">Staphylococcus epidermidis (strain ATCC 35984 / DSM 28319 / BCRC 17069 / CCUG 31568 / BM 3577 / RP62A)</name>
    <dbReference type="NCBI Taxonomy" id="176279"/>
    <lineage>
        <taxon>Bacteria</taxon>
        <taxon>Bacillati</taxon>
        <taxon>Bacillota</taxon>
        <taxon>Bacilli</taxon>
        <taxon>Bacillales</taxon>
        <taxon>Staphylococcaceae</taxon>
        <taxon>Staphylococcus</taxon>
    </lineage>
</organism>
<feature type="chain" id="PRO_0000161318" description="Fumarate hydratase class II">
    <location>
        <begin position="1"/>
        <end position="461"/>
    </location>
</feature>
<feature type="active site" description="Proton donor/acceptor" evidence="1">
    <location>
        <position position="186"/>
    </location>
</feature>
<feature type="active site" evidence="1">
    <location>
        <position position="316"/>
    </location>
</feature>
<feature type="binding site" evidence="1">
    <location>
        <begin position="97"/>
        <end position="99"/>
    </location>
    <ligand>
        <name>substrate</name>
    </ligand>
</feature>
<feature type="binding site" description="in site B" evidence="1">
    <location>
        <begin position="127"/>
        <end position="130"/>
    </location>
    <ligand>
        <name>substrate</name>
    </ligand>
</feature>
<feature type="binding site" evidence="1">
    <location>
        <begin position="137"/>
        <end position="139"/>
    </location>
    <ligand>
        <name>substrate</name>
    </ligand>
</feature>
<feature type="binding site" evidence="1">
    <location>
        <position position="185"/>
    </location>
    <ligand>
        <name>substrate</name>
    </ligand>
</feature>
<feature type="binding site" evidence="1">
    <location>
        <position position="317"/>
    </location>
    <ligand>
        <name>substrate</name>
    </ligand>
</feature>
<feature type="binding site" evidence="1">
    <location>
        <begin position="322"/>
        <end position="324"/>
    </location>
    <ligand>
        <name>substrate</name>
    </ligand>
</feature>
<feature type="site" description="Important for catalytic activity" evidence="1">
    <location>
        <position position="329"/>
    </location>
</feature>
<keyword id="KW-0963">Cytoplasm</keyword>
<keyword id="KW-0456">Lyase</keyword>
<keyword id="KW-1185">Reference proteome</keyword>
<keyword id="KW-0816">Tricarboxylic acid cycle</keyword>
<reference key="1">
    <citation type="journal article" date="2005" name="J. Bacteriol.">
        <title>Insights on evolution of virulence and resistance from the complete genome analysis of an early methicillin-resistant Staphylococcus aureus strain and a biofilm-producing methicillin-resistant Staphylococcus epidermidis strain.</title>
        <authorList>
            <person name="Gill S.R."/>
            <person name="Fouts D.E."/>
            <person name="Archer G.L."/>
            <person name="Mongodin E.F."/>
            <person name="DeBoy R.T."/>
            <person name="Ravel J."/>
            <person name="Paulsen I.T."/>
            <person name="Kolonay J.F."/>
            <person name="Brinkac L.M."/>
            <person name="Beanan M.J."/>
            <person name="Dodson R.J."/>
            <person name="Daugherty S.C."/>
            <person name="Madupu R."/>
            <person name="Angiuoli S.V."/>
            <person name="Durkin A.S."/>
            <person name="Haft D.H."/>
            <person name="Vamathevan J.J."/>
            <person name="Khouri H."/>
            <person name="Utterback T.R."/>
            <person name="Lee C."/>
            <person name="Dimitrov G."/>
            <person name="Jiang L."/>
            <person name="Qin H."/>
            <person name="Weidman J."/>
            <person name="Tran K."/>
            <person name="Kang K.H."/>
            <person name="Hance I.R."/>
            <person name="Nelson K.E."/>
            <person name="Fraser C.M."/>
        </authorList>
    </citation>
    <scope>NUCLEOTIDE SEQUENCE [LARGE SCALE GENOMIC DNA]</scope>
    <source>
        <strain>ATCC 35984 / DSM 28319 / BCRC 17069 / CCUG 31568 / BM 3577 / RP62A</strain>
    </source>
</reference>
<dbReference type="EC" id="4.2.1.2" evidence="1"/>
<dbReference type="EMBL" id="CP000029">
    <property type="protein sequence ID" value="AAW54715.1"/>
    <property type="molecule type" value="Genomic_DNA"/>
</dbReference>
<dbReference type="RefSeq" id="WP_001829862.1">
    <property type="nucleotide sequence ID" value="NC_002976.3"/>
</dbReference>
<dbReference type="SMR" id="Q5HN85"/>
<dbReference type="STRING" id="176279.SERP1387"/>
<dbReference type="GeneID" id="50018393"/>
<dbReference type="KEGG" id="ser:SERP1387"/>
<dbReference type="eggNOG" id="COG0114">
    <property type="taxonomic scope" value="Bacteria"/>
</dbReference>
<dbReference type="HOGENOM" id="CLU_021594_4_1_9"/>
<dbReference type="UniPathway" id="UPA00223">
    <property type="reaction ID" value="UER01007"/>
</dbReference>
<dbReference type="Proteomes" id="UP000000531">
    <property type="component" value="Chromosome"/>
</dbReference>
<dbReference type="GO" id="GO:0005737">
    <property type="term" value="C:cytoplasm"/>
    <property type="evidence" value="ECO:0007669"/>
    <property type="project" value="UniProtKB-SubCell"/>
</dbReference>
<dbReference type="GO" id="GO:0004333">
    <property type="term" value="F:fumarate hydratase activity"/>
    <property type="evidence" value="ECO:0007669"/>
    <property type="project" value="UniProtKB-UniRule"/>
</dbReference>
<dbReference type="GO" id="GO:0006106">
    <property type="term" value="P:fumarate metabolic process"/>
    <property type="evidence" value="ECO:0007669"/>
    <property type="project" value="InterPro"/>
</dbReference>
<dbReference type="GO" id="GO:0006108">
    <property type="term" value="P:malate metabolic process"/>
    <property type="evidence" value="ECO:0007669"/>
    <property type="project" value="TreeGrafter"/>
</dbReference>
<dbReference type="GO" id="GO:0006099">
    <property type="term" value="P:tricarboxylic acid cycle"/>
    <property type="evidence" value="ECO:0007669"/>
    <property type="project" value="UniProtKB-UniRule"/>
</dbReference>
<dbReference type="CDD" id="cd01362">
    <property type="entry name" value="Fumarase_classII"/>
    <property type="match status" value="1"/>
</dbReference>
<dbReference type="FunFam" id="1.10.40.30:FF:000002">
    <property type="entry name" value="Fumarate hydratase class II"/>
    <property type="match status" value="1"/>
</dbReference>
<dbReference type="FunFam" id="1.10.275.10:FF:000001">
    <property type="entry name" value="Fumarate hydratase, mitochondrial"/>
    <property type="match status" value="1"/>
</dbReference>
<dbReference type="FunFam" id="1.20.200.10:FF:000001">
    <property type="entry name" value="Fumarate hydratase, mitochondrial"/>
    <property type="match status" value="1"/>
</dbReference>
<dbReference type="Gene3D" id="1.10.40.30">
    <property type="entry name" value="Fumarase/aspartase (C-terminal domain)"/>
    <property type="match status" value="1"/>
</dbReference>
<dbReference type="Gene3D" id="1.20.200.10">
    <property type="entry name" value="Fumarase/aspartase (Central domain)"/>
    <property type="match status" value="1"/>
</dbReference>
<dbReference type="Gene3D" id="1.10.275.10">
    <property type="entry name" value="Fumarase/aspartase (N-terminal domain)"/>
    <property type="match status" value="1"/>
</dbReference>
<dbReference type="HAMAP" id="MF_00743">
    <property type="entry name" value="FumaraseC"/>
    <property type="match status" value="1"/>
</dbReference>
<dbReference type="InterPro" id="IPR005677">
    <property type="entry name" value="Fum_hydII"/>
</dbReference>
<dbReference type="InterPro" id="IPR024083">
    <property type="entry name" value="Fumarase/histidase_N"/>
</dbReference>
<dbReference type="InterPro" id="IPR018951">
    <property type="entry name" value="Fumarase_C_C"/>
</dbReference>
<dbReference type="InterPro" id="IPR020557">
    <property type="entry name" value="Fumarate_lyase_CS"/>
</dbReference>
<dbReference type="InterPro" id="IPR000362">
    <property type="entry name" value="Fumarate_lyase_fam"/>
</dbReference>
<dbReference type="InterPro" id="IPR022761">
    <property type="entry name" value="Fumarate_lyase_N"/>
</dbReference>
<dbReference type="InterPro" id="IPR008948">
    <property type="entry name" value="L-Aspartase-like"/>
</dbReference>
<dbReference type="NCBIfam" id="TIGR00979">
    <property type="entry name" value="fumC_II"/>
    <property type="match status" value="1"/>
</dbReference>
<dbReference type="NCBIfam" id="NF008909">
    <property type="entry name" value="PRK12273.1"/>
    <property type="match status" value="1"/>
</dbReference>
<dbReference type="PANTHER" id="PTHR11444">
    <property type="entry name" value="ASPARTATEAMMONIA/ARGININOSUCCINATE/ADENYLOSUCCINATE LYASE"/>
    <property type="match status" value="1"/>
</dbReference>
<dbReference type="PANTHER" id="PTHR11444:SF1">
    <property type="entry name" value="FUMARATE HYDRATASE, MITOCHONDRIAL"/>
    <property type="match status" value="1"/>
</dbReference>
<dbReference type="Pfam" id="PF10415">
    <property type="entry name" value="FumaraseC_C"/>
    <property type="match status" value="1"/>
</dbReference>
<dbReference type="Pfam" id="PF00206">
    <property type="entry name" value="Lyase_1"/>
    <property type="match status" value="1"/>
</dbReference>
<dbReference type="PRINTS" id="PR00145">
    <property type="entry name" value="ARGSUCLYASE"/>
</dbReference>
<dbReference type="PRINTS" id="PR00149">
    <property type="entry name" value="FUMRATELYASE"/>
</dbReference>
<dbReference type="SUPFAM" id="SSF48557">
    <property type="entry name" value="L-aspartase-like"/>
    <property type="match status" value="1"/>
</dbReference>
<dbReference type="PROSITE" id="PS00163">
    <property type="entry name" value="FUMARATE_LYASES"/>
    <property type="match status" value="1"/>
</dbReference>
<accession>Q5HN85</accession>
<sequence>MSVRIEHDTFGEIEVPEDKYWGAQTERSKRNFPVGKEHMPIQVIYGFAQLKRGAALANHELGKLSDEKKNAIVYACDRILNGELDNHFPLVIWQTGSGTQSNMNVNEVVSYVANEYLKKHGSKETIHPNDDVNKSQSSNDTFPTAMHVALFHEVETKLEPALNHLRQTFKEKEDQYQSIIKIGRTHLQDATPIKLGQEISGWRYMLEKCEQLLSESKKHILNLAIGGTAVGTGINAHPEFGHKVAKYISQNTGYAFVSSENKFHALTSHDEIVQLHGTLKALATDLMKIANDIRWLASGPRAGLAEISIPENEPGSSIMPGKVNPTQCEMLTMVAVQVMGNDTTVGIASSQGNFELNVFKPVIMHNTLQSIYLLADGMNTFNKNCAIGIQPIEENINNYLNQSLMLVTALNPHIGYEKAAQIAKKAHKEGLTLKESAIESGYVTESQFEEWIKPEDMVDPH</sequence>
<comment type="function">
    <text evidence="1">Involved in the TCA cycle. Catalyzes the stereospecific interconversion of fumarate to L-malate.</text>
</comment>
<comment type="catalytic activity">
    <reaction evidence="1">
        <text>(S)-malate = fumarate + H2O</text>
        <dbReference type="Rhea" id="RHEA:12460"/>
        <dbReference type="ChEBI" id="CHEBI:15377"/>
        <dbReference type="ChEBI" id="CHEBI:15589"/>
        <dbReference type="ChEBI" id="CHEBI:29806"/>
        <dbReference type="EC" id="4.2.1.2"/>
    </reaction>
</comment>
<comment type="pathway">
    <text evidence="1">Carbohydrate metabolism; tricarboxylic acid cycle; (S)-malate from fumarate: step 1/1.</text>
</comment>
<comment type="subunit">
    <text evidence="1">Homotetramer.</text>
</comment>
<comment type="subcellular location">
    <subcellularLocation>
        <location evidence="1">Cytoplasm</location>
    </subcellularLocation>
</comment>
<comment type="miscellaneous">
    <text evidence="1">There are 2 substrate-binding sites: the catalytic A site, and the non-catalytic B site that may play a role in the transfer of substrate or product between the active site and the solvent. Alternatively, the B site may bind allosteric effectors.</text>
</comment>
<comment type="similarity">
    <text evidence="1">Belongs to the class-II fumarase/aspartase family. Fumarase subfamily.</text>
</comment>